<accession>B7VLE1</accession>
<reference key="1">
    <citation type="submission" date="2009-02" db="EMBL/GenBank/DDBJ databases">
        <title>Vibrio splendidus str. LGP32 complete genome.</title>
        <authorList>
            <person name="Mazel D."/>
            <person name="Le Roux F."/>
        </authorList>
    </citation>
    <scope>NUCLEOTIDE SEQUENCE [LARGE SCALE GENOMIC DNA]</scope>
    <source>
        <strain>LGP32</strain>
    </source>
</reference>
<keyword id="KW-0687">Ribonucleoprotein</keyword>
<keyword id="KW-0689">Ribosomal protein</keyword>
<keyword id="KW-0694">RNA-binding</keyword>
<keyword id="KW-0699">rRNA-binding</keyword>
<comment type="function">
    <text evidence="1">This is one of the proteins that bind and probably mediate the attachment of the 5S RNA into the large ribosomal subunit, where it forms part of the central protuberance.</text>
</comment>
<comment type="subunit">
    <text evidence="1">Part of the 50S ribosomal subunit; part of the 5S rRNA/L5/L18/L25 subcomplex. Contacts the 5S and 23S rRNAs.</text>
</comment>
<comment type="similarity">
    <text evidence="1">Belongs to the universal ribosomal protein uL18 family.</text>
</comment>
<feature type="chain" id="PRO_1000166259" description="Large ribosomal subunit protein uL18">
    <location>
        <begin position="1"/>
        <end position="117"/>
    </location>
</feature>
<proteinExistence type="inferred from homology"/>
<name>RL18_VIBA3</name>
<sequence length="117" mass="12568">MDKKASRIRRATRARRKIAELGATRLVVHRTPRHVYAQVISANGSEVIAAASTVEKAIREQVKNTGNVDAAKAVGKAVAERALEKGVASVAFDRSGFQYHGRVAALAESAREAGLKF</sequence>
<organism>
    <name type="scientific">Vibrio atlanticus (strain LGP32)</name>
    <name type="common">Vibrio splendidus (strain Mel32)</name>
    <dbReference type="NCBI Taxonomy" id="575788"/>
    <lineage>
        <taxon>Bacteria</taxon>
        <taxon>Pseudomonadati</taxon>
        <taxon>Pseudomonadota</taxon>
        <taxon>Gammaproteobacteria</taxon>
        <taxon>Vibrionales</taxon>
        <taxon>Vibrionaceae</taxon>
        <taxon>Vibrio</taxon>
    </lineage>
</organism>
<protein>
    <recommendedName>
        <fullName evidence="1">Large ribosomal subunit protein uL18</fullName>
    </recommendedName>
    <alternativeName>
        <fullName evidence="2">50S ribosomal protein L18</fullName>
    </alternativeName>
</protein>
<dbReference type="EMBL" id="FM954972">
    <property type="protein sequence ID" value="CAV20107.1"/>
    <property type="molecule type" value="Genomic_DNA"/>
</dbReference>
<dbReference type="SMR" id="B7VLE1"/>
<dbReference type="STRING" id="575788.VS_2815"/>
<dbReference type="KEGG" id="vsp:VS_2815"/>
<dbReference type="eggNOG" id="COG0256">
    <property type="taxonomic scope" value="Bacteria"/>
</dbReference>
<dbReference type="HOGENOM" id="CLU_098841_0_1_6"/>
<dbReference type="Proteomes" id="UP000009100">
    <property type="component" value="Chromosome 1"/>
</dbReference>
<dbReference type="GO" id="GO:0022625">
    <property type="term" value="C:cytosolic large ribosomal subunit"/>
    <property type="evidence" value="ECO:0007669"/>
    <property type="project" value="TreeGrafter"/>
</dbReference>
<dbReference type="GO" id="GO:0008097">
    <property type="term" value="F:5S rRNA binding"/>
    <property type="evidence" value="ECO:0007669"/>
    <property type="project" value="TreeGrafter"/>
</dbReference>
<dbReference type="GO" id="GO:0003735">
    <property type="term" value="F:structural constituent of ribosome"/>
    <property type="evidence" value="ECO:0007669"/>
    <property type="project" value="InterPro"/>
</dbReference>
<dbReference type="GO" id="GO:0006412">
    <property type="term" value="P:translation"/>
    <property type="evidence" value="ECO:0007669"/>
    <property type="project" value="UniProtKB-UniRule"/>
</dbReference>
<dbReference type="CDD" id="cd00432">
    <property type="entry name" value="Ribosomal_L18_L5e"/>
    <property type="match status" value="1"/>
</dbReference>
<dbReference type="FunFam" id="3.30.420.100:FF:000001">
    <property type="entry name" value="50S ribosomal protein L18"/>
    <property type="match status" value="1"/>
</dbReference>
<dbReference type="Gene3D" id="3.30.420.100">
    <property type="match status" value="1"/>
</dbReference>
<dbReference type="HAMAP" id="MF_01337_B">
    <property type="entry name" value="Ribosomal_uL18_B"/>
    <property type="match status" value="1"/>
</dbReference>
<dbReference type="InterPro" id="IPR004389">
    <property type="entry name" value="Ribosomal_uL18_bac-type"/>
</dbReference>
<dbReference type="InterPro" id="IPR005484">
    <property type="entry name" value="Ribosomal_uL18_bac/euk"/>
</dbReference>
<dbReference type="NCBIfam" id="TIGR00060">
    <property type="entry name" value="L18_bact"/>
    <property type="match status" value="1"/>
</dbReference>
<dbReference type="PANTHER" id="PTHR12899">
    <property type="entry name" value="39S RIBOSOMAL PROTEIN L18, MITOCHONDRIAL"/>
    <property type="match status" value="1"/>
</dbReference>
<dbReference type="PANTHER" id="PTHR12899:SF3">
    <property type="entry name" value="LARGE RIBOSOMAL SUBUNIT PROTEIN UL18M"/>
    <property type="match status" value="1"/>
</dbReference>
<dbReference type="Pfam" id="PF00861">
    <property type="entry name" value="Ribosomal_L18p"/>
    <property type="match status" value="1"/>
</dbReference>
<dbReference type="SUPFAM" id="SSF53137">
    <property type="entry name" value="Translational machinery components"/>
    <property type="match status" value="1"/>
</dbReference>
<evidence type="ECO:0000255" key="1">
    <source>
        <dbReference type="HAMAP-Rule" id="MF_01337"/>
    </source>
</evidence>
<evidence type="ECO:0000305" key="2"/>
<gene>
    <name evidence="1" type="primary">rplR</name>
    <name type="ordered locus">VS_2815</name>
</gene>